<protein>
    <recommendedName>
        <fullName evidence="1">Orotidine 5'-phosphate decarboxylase</fullName>
        <ecNumber evidence="1">4.1.1.23</ecNumber>
    </recommendedName>
    <alternativeName>
        <fullName evidence="1">OMP decarboxylase</fullName>
        <shortName evidence="1">OMPDCase</shortName>
        <shortName evidence="1">OMPdecase</shortName>
    </alternativeName>
</protein>
<organism>
    <name type="scientific">Geobacter sulfurreducens (strain ATCC 51573 / DSM 12127 / PCA)</name>
    <dbReference type="NCBI Taxonomy" id="243231"/>
    <lineage>
        <taxon>Bacteria</taxon>
        <taxon>Pseudomonadati</taxon>
        <taxon>Thermodesulfobacteriota</taxon>
        <taxon>Desulfuromonadia</taxon>
        <taxon>Geobacterales</taxon>
        <taxon>Geobacteraceae</taxon>
        <taxon>Geobacter</taxon>
    </lineage>
</organism>
<feature type="chain" id="PRO_0000241862" description="Orotidine 5'-phosphate decarboxylase">
    <location>
        <begin position="1"/>
        <end position="239"/>
    </location>
</feature>
<feature type="active site" description="Proton donor" evidence="1">
    <location>
        <position position="66"/>
    </location>
</feature>
<feature type="binding site" evidence="1">
    <location>
        <position position="15"/>
    </location>
    <ligand>
        <name>substrate</name>
    </ligand>
</feature>
<feature type="binding site" evidence="1">
    <location>
        <position position="37"/>
    </location>
    <ligand>
        <name>substrate</name>
    </ligand>
</feature>
<feature type="binding site" evidence="1">
    <location>
        <begin position="64"/>
        <end position="73"/>
    </location>
    <ligand>
        <name>substrate</name>
    </ligand>
</feature>
<feature type="binding site" evidence="1">
    <location>
        <position position="126"/>
    </location>
    <ligand>
        <name>substrate</name>
    </ligand>
</feature>
<feature type="binding site" evidence="1">
    <location>
        <position position="187"/>
    </location>
    <ligand>
        <name>substrate</name>
    </ligand>
</feature>
<feature type="binding site" evidence="1">
    <location>
        <position position="196"/>
    </location>
    <ligand>
        <name>substrate</name>
    </ligand>
</feature>
<feature type="binding site" evidence="1">
    <location>
        <position position="216"/>
    </location>
    <ligand>
        <name>substrate</name>
    </ligand>
</feature>
<feature type="binding site" evidence="1">
    <location>
        <position position="217"/>
    </location>
    <ligand>
        <name>substrate</name>
    </ligand>
</feature>
<proteinExistence type="inferred from homology"/>
<name>PYRF_GEOSL</name>
<dbReference type="EC" id="4.1.1.23" evidence="1"/>
<dbReference type="EMBL" id="AE017180">
    <property type="protein sequence ID" value="AAR34835.1"/>
    <property type="molecule type" value="Genomic_DNA"/>
</dbReference>
<dbReference type="RefSeq" id="NP_952512.1">
    <property type="nucleotide sequence ID" value="NC_002939.5"/>
</dbReference>
<dbReference type="RefSeq" id="WP_010942107.1">
    <property type="nucleotide sequence ID" value="NC_002939.5"/>
</dbReference>
<dbReference type="SMR" id="Q74D58"/>
<dbReference type="FunCoup" id="Q74D58">
    <property type="interactions" value="385"/>
</dbReference>
<dbReference type="STRING" id="243231.GSU1461"/>
<dbReference type="EnsemblBacteria" id="AAR34835">
    <property type="protein sequence ID" value="AAR34835"/>
    <property type="gene ID" value="GSU1461"/>
</dbReference>
<dbReference type="KEGG" id="gsu:GSU1461"/>
<dbReference type="PATRIC" id="fig|243231.5.peg.1507"/>
<dbReference type="eggNOG" id="COG0284">
    <property type="taxonomic scope" value="Bacteria"/>
</dbReference>
<dbReference type="HOGENOM" id="CLU_067069_0_0_7"/>
<dbReference type="InParanoid" id="Q74D58"/>
<dbReference type="OrthoDB" id="9806203at2"/>
<dbReference type="UniPathway" id="UPA00070">
    <property type="reaction ID" value="UER00120"/>
</dbReference>
<dbReference type="Proteomes" id="UP000000577">
    <property type="component" value="Chromosome"/>
</dbReference>
<dbReference type="GO" id="GO:0005829">
    <property type="term" value="C:cytosol"/>
    <property type="evidence" value="ECO:0000318"/>
    <property type="project" value="GO_Central"/>
</dbReference>
<dbReference type="GO" id="GO:0004590">
    <property type="term" value="F:orotidine-5'-phosphate decarboxylase activity"/>
    <property type="evidence" value="ECO:0000318"/>
    <property type="project" value="GO_Central"/>
</dbReference>
<dbReference type="GO" id="GO:0006207">
    <property type="term" value="P:'de novo' pyrimidine nucleobase biosynthetic process"/>
    <property type="evidence" value="ECO:0000318"/>
    <property type="project" value="GO_Central"/>
</dbReference>
<dbReference type="GO" id="GO:0044205">
    <property type="term" value="P:'de novo' UMP biosynthetic process"/>
    <property type="evidence" value="ECO:0007669"/>
    <property type="project" value="UniProtKB-UniRule"/>
</dbReference>
<dbReference type="CDD" id="cd04725">
    <property type="entry name" value="OMP_decarboxylase_like"/>
    <property type="match status" value="1"/>
</dbReference>
<dbReference type="FunFam" id="3.20.20.70:FF:000015">
    <property type="entry name" value="Orotidine 5'-phosphate decarboxylase"/>
    <property type="match status" value="1"/>
</dbReference>
<dbReference type="Gene3D" id="3.20.20.70">
    <property type="entry name" value="Aldolase class I"/>
    <property type="match status" value="1"/>
</dbReference>
<dbReference type="HAMAP" id="MF_01200_B">
    <property type="entry name" value="OMPdecase_type1_B"/>
    <property type="match status" value="1"/>
</dbReference>
<dbReference type="InterPro" id="IPR013785">
    <property type="entry name" value="Aldolase_TIM"/>
</dbReference>
<dbReference type="InterPro" id="IPR014732">
    <property type="entry name" value="OMPdecase"/>
</dbReference>
<dbReference type="InterPro" id="IPR018089">
    <property type="entry name" value="OMPdecase_AS"/>
</dbReference>
<dbReference type="InterPro" id="IPR047596">
    <property type="entry name" value="OMPdecase_bac"/>
</dbReference>
<dbReference type="InterPro" id="IPR001754">
    <property type="entry name" value="OMPdeCOase_dom"/>
</dbReference>
<dbReference type="InterPro" id="IPR011060">
    <property type="entry name" value="RibuloseP-bd_barrel"/>
</dbReference>
<dbReference type="NCBIfam" id="NF001273">
    <property type="entry name" value="PRK00230.1"/>
    <property type="match status" value="1"/>
</dbReference>
<dbReference type="NCBIfam" id="TIGR01740">
    <property type="entry name" value="pyrF"/>
    <property type="match status" value="1"/>
</dbReference>
<dbReference type="PANTHER" id="PTHR32119">
    <property type="entry name" value="OROTIDINE 5'-PHOSPHATE DECARBOXYLASE"/>
    <property type="match status" value="1"/>
</dbReference>
<dbReference type="PANTHER" id="PTHR32119:SF2">
    <property type="entry name" value="OROTIDINE 5'-PHOSPHATE DECARBOXYLASE"/>
    <property type="match status" value="1"/>
</dbReference>
<dbReference type="Pfam" id="PF00215">
    <property type="entry name" value="OMPdecase"/>
    <property type="match status" value="1"/>
</dbReference>
<dbReference type="SMART" id="SM00934">
    <property type="entry name" value="OMPdecase"/>
    <property type="match status" value="1"/>
</dbReference>
<dbReference type="SUPFAM" id="SSF51366">
    <property type="entry name" value="Ribulose-phoshate binding barrel"/>
    <property type="match status" value="1"/>
</dbReference>
<dbReference type="PROSITE" id="PS00156">
    <property type="entry name" value="OMPDECASE"/>
    <property type="match status" value="1"/>
</dbReference>
<comment type="function">
    <text evidence="1">Catalyzes the decarboxylation of orotidine 5'-monophosphate (OMP) to uridine 5'-monophosphate (UMP).</text>
</comment>
<comment type="catalytic activity">
    <reaction evidence="1">
        <text>orotidine 5'-phosphate + H(+) = UMP + CO2</text>
        <dbReference type="Rhea" id="RHEA:11596"/>
        <dbReference type="ChEBI" id="CHEBI:15378"/>
        <dbReference type="ChEBI" id="CHEBI:16526"/>
        <dbReference type="ChEBI" id="CHEBI:57538"/>
        <dbReference type="ChEBI" id="CHEBI:57865"/>
        <dbReference type="EC" id="4.1.1.23"/>
    </reaction>
</comment>
<comment type="pathway">
    <text evidence="1">Pyrimidine metabolism; UMP biosynthesis via de novo pathway; UMP from orotate: step 2/2.</text>
</comment>
<comment type="subunit">
    <text evidence="1">Homodimer.</text>
</comment>
<comment type="similarity">
    <text evidence="1">Belongs to the OMP decarboxylase family. Type 1 subfamily.</text>
</comment>
<keyword id="KW-0210">Decarboxylase</keyword>
<keyword id="KW-0456">Lyase</keyword>
<keyword id="KW-0665">Pyrimidine biosynthesis</keyword>
<keyword id="KW-1185">Reference proteome</keyword>
<reference key="1">
    <citation type="journal article" date="2003" name="Science">
        <title>Genome of Geobacter sulfurreducens: metal reduction in subsurface environments.</title>
        <authorList>
            <person name="Methe B.A."/>
            <person name="Nelson K.E."/>
            <person name="Eisen J.A."/>
            <person name="Paulsen I.T."/>
            <person name="Nelson W.C."/>
            <person name="Heidelberg J.F."/>
            <person name="Wu D."/>
            <person name="Wu M."/>
            <person name="Ward N.L."/>
            <person name="Beanan M.J."/>
            <person name="Dodson R.J."/>
            <person name="Madupu R."/>
            <person name="Brinkac L.M."/>
            <person name="Daugherty S.C."/>
            <person name="DeBoy R.T."/>
            <person name="Durkin A.S."/>
            <person name="Gwinn M.L."/>
            <person name="Kolonay J.F."/>
            <person name="Sullivan S.A."/>
            <person name="Haft D.H."/>
            <person name="Selengut J."/>
            <person name="Davidsen T.M."/>
            <person name="Zafar N."/>
            <person name="White O."/>
            <person name="Tran B."/>
            <person name="Romero C."/>
            <person name="Forberger H.A."/>
            <person name="Weidman J.F."/>
            <person name="Khouri H.M."/>
            <person name="Feldblyum T.V."/>
            <person name="Utterback T.R."/>
            <person name="Van Aken S.E."/>
            <person name="Lovley D.R."/>
            <person name="Fraser C.M."/>
        </authorList>
    </citation>
    <scope>NUCLEOTIDE SEQUENCE [LARGE SCALE GENOMIC DNA]</scope>
    <source>
        <strain>ATCC 51573 / DSM 12127 / PCA</strain>
    </source>
</reference>
<sequence length="239" mass="25818">MTRDQAREKVIFALDSSEFAHVQYWAETLSDRVGMFKVGKQLFTACGPATVRMIQKFGGEVFLDLKFHDIPNTVAMASLEAARLGVKLFNLHALGGYEMMARTVEALDKEFKGGERAKVLAVTILTSSTEETLRQVGIESPVEEMVVRLATLARKAGIDGVVASPREIPLIREACGPDFLIVTPGVRPAFAALNDQKRVMTPAEAVRAGGDYLVIGRPIGDAPDPAGAAEMILDEIMAG</sequence>
<accession>Q74D58</accession>
<gene>
    <name evidence="1" type="primary">pyrF</name>
    <name type="ordered locus">GSU1461</name>
</gene>
<evidence type="ECO:0000255" key="1">
    <source>
        <dbReference type="HAMAP-Rule" id="MF_01200"/>
    </source>
</evidence>